<feature type="chain" id="PRO_0000340709" description="Uncharacterized protein C17orf100 homolog">
    <location>
        <begin position="1"/>
        <end position="129"/>
    </location>
</feature>
<feature type="region of interest" description="Disordered" evidence="1">
    <location>
        <begin position="1"/>
        <end position="129"/>
    </location>
</feature>
<feature type="compositionally biased region" description="Basic and acidic residues" evidence="1">
    <location>
        <begin position="18"/>
        <end position="46"/>
    </location>
</feature>
<feature type="compositionally biased region" description="Low complexity" evidence="1">
    <location>
        <begin position="47"/>
        <end position="59"/>
    </location>
</feature>
<feature type="compositionally biased region" description="Polar residues" evidence="1">
    <location>
        <begin position="70"/>
        <end position="97"/>
    </location>
</feature>
<feature type="sequence conflict" description="In Ref. 1; BAE21139." evidence="2" ref="1">
    <original>S</original>
    <variation>R</variation>
    <location>
        <position position="119"/>
    </location>
</feature>
<organism>
    <name type="scientific">Mus musculus</name>
    <name type="common">Mouse</name>
    <dbReference type="NCBI Taxonomy" id="10090"/>
    <lineage>
        <taxon>Eukaryota</taxon>
        <taxon>Metazoa</taxon>
        <taxon>Chordata</taxon>
        <taxon>Craniata</taxon>
        <taxon>Vertebrata</taxon>
        <taxon>Euteleostomi</taxon>
        <taxon>Mammalia</taxon>
        <taxon>Eutheria</taxon>
        <taxon>Euarchontoglires</taxon>
        <taxon>Glires</taxon>
        <taxon>Rodentia</taxon>
        <taxon>Myomorpha</taxon>
        <taxon>Muroidea</taxon>
        <taxon>Muridae</taxon>
        <taxon>Murinae</taxon>
        <taxon>Mus</taxon>
        <taxon>Mus</taxon>
    </lineage>
</organism>
<sequence length="129" mass="14539">MGRMASPLRSKSSAPRVESTRHKETSTVRVETSSHREETSSHRVETSSRQVRTSSRQVETSQRHREGPSLTPSTKRLPQFLEVSSQHVETSSQCTETSSRHVRASSSLRVETTVHRVESPARQSARMAR</sequence>
<protein>
    <recommendedName>
        <fullName>Uncharacterized protein C17orf100 homolog</fullName>
    </recommendedName>
</protein>
<evidence type="ECO:0000256" key="1">
    <source>
        <dbReference type="SAM" id="MobiDB-lite"/>
    </source>
</evidence>
<evidence type="ECO:0000305" key="2"/>
<dbReference type="EMBL" id="AK043242">
    <property type="protein sequence ID" value="BAC31502.1"/>
    <property type="molecule type" value="mRNA"/>
</dbReference>
<dbReference type="EMBL" id="AK044443">
    <property type="protein sequence ID" value="BAC31922.1"/>
    <property type="molecule type" value="mRNA"/>
</dbReference>
<dbReference type="EMBL" id="AK132388">
    <property type="protein sequence ID" value="BAE21139.1"/>
    <property type="molecule type" value="mRNA"/>
</dbReference>
<dbReference type="CCDS" id="CCDS88186.1"/>
<dbReference type="RefSeq" id="NP_001157200.1">
    <property type="nucleotide sequence ID" value="NM_001163728.1"/>
</dbReference>
<dbReference type="iPTMnet" id="Q8BGJ3"/>
<dbReference type="PhosphoSitePlus" id="Q8BGJ3"/>
<dbReference type="Antibodypedia" id="79276">
    <property type="antibodies" value="3 antibodies from 3 providers"/>
</dbReference>
<dbReference type="Ensembl" id="ENSMUST00000066087.5">
    <property type="protein sequence ID" value="ENSMUSP00000159068.2"/>
    <property type="gene ID" value="ENSMUSG00000053574.6"/>
</dbReference>
<dbReference type="Ensembl" id="ENSMUST00000124762.2">
    <property type="protein sequence ID" value="ENSMUSP00000159117.2"/>
    <property type="gene ID" value="ENSMUSG00000053574.6"/>
</dbReference>
<dbReference type="GeneID" id="75304"/>
<dbReference type="KEGG" id="mmu:75304"/>
<dbReference type="UCSC" id="uc011xyh.1">
    <property type="organism name" value="mouse"/>
</dbReference>
<dbReference type="AGR" id="MGI:1922554"/>
<dbReference type="MGI" id="MGI:1922554">
    <property type="gene designation" value="4930563E22Rik"/>
</dbReference>
<dbReference type="VEuPathDB" id="HostDB:ENSMUSG00000053574"/>
<dbReference type="GeneTree" id="ENSGT00390000000359"/>
<dbReference type="InParanoid" id="Q8BGJ3"/>
<dbReference type="OMA" id="TSERRCE"/>
<dbReference type="OrthoDB" id="9629353at2759"/>
<dbReference type="PhylomeDB" id="Q8BGJ3"/>
<dbReference type="BioGRID-ORCS" id="75304">
    <property type="hits" value="0 hits in 17 CRISPR screens"/>
</dbReference>
<dbReference type="PRO" id="PR:Q8BGJ3"/>
<dbReference type="Proteomes" id="UP000000589">
    <property type="component" value="Chromosome 11"/>
</dbReference>
<dbReference type="RNAct" id="Q8BGJ3">
    <property type="molecule type" value="protein"/>
</dbReference>
<dbReference type="Bgee" id="ENSMUSG00000053574">
    <property type="expression patterns" value="Expressed in rostral migratory stream and 133 other cell types or tissues"/>
</dbReference>
<accession>Q8BGJ3</accession>
<accession>Q3V1L1</accession>
<proteinExistence type="evidence at transcript level"/>
<keyword id="KW-1185">Reference proteome</keyword>
<reference key="1">
    <citation type="journal article" date="2005" name="Science">
        <title>The transcriptional landscape of the mammalian genome.</title>
        <authorList>
            <person name="Carninci P."/>
            <person name="Kasukawa T."/>
            <person name="Katayama S."/>
            <person name="Gough J."/>
            <person name="Frith M.C."/>
            <person name="Maeda N."/>
            <person name="Oyama R."/>
            <person name="Ravasi T."/>
            <person name="Lenhard B."/>
            <person name="Wells C."/>
            <person name="Kodzius R."/>
            <person name="Shimokawa K."/>
            <person name="Bajic V.B."/>
            <person name="Brenner S.E."/>
            <person name="Batalov S."/>
            <person name="Forrest A.R."/>
            <person name="Zavolan M."/>
            <person name="Davis M.J."/>
            <person name="Wilming L.G."/>
            <person name="Aidinis V."/>
            <person name="Allen J.E."/>
            <person name="Ambesi-Impiombato A."/>
            <person name="Apweiler R."/>
            <person name="Aturaliya R.N."/>
            <person name="Bailey T.L."/>
            <person name="Bansal M."/>
            <person name="Baxter L."/>
            <person name="Beisel K.W."/>
            <person name="Bersano T."/>
            <person name="Bono H."/>
            <person name="Chalk A.M."/>
            <person name="Chiu K.P."/>
            <person name="Choudhary V."/>
            <person name="Christoffels A."/>
            <person name="Clutterbuck D.R."/>
            <person name="Crowe M.L."/>
            <person name="Dalla E."/>
            <person name="Dalrymple B.P."/>
            <person name="de Bono B."/>
            <person name="Della Gatta G."/>
            <person name="di Bernardo D."/>
            <person name="Down T."/>
            <person name="Engstrom P."/>
            <person name="Fagiolini M."/>
            <person name="Faulkner G."/>
            <person name="Fletcher C.F."/>
            <person name="Fukushima T."/>
            <person name="Furuno M."/>
            <person name="Futaki S."/>
            <person name="Gariboldi M."/>
            <person name="Georgii-Hemming P."/>
            <person name="Gingeras T.R."/>
            <person name="Gojobori T."/>
            <person name="Green R.E."/>
            <person name="Gustincich S."/>
            <person name="Harbers M."/>
            <person name="Hayashi Y."/>
            <person name="Hensch T.K."/>
            <person name="Hirokawa N."/>
            <person name="Hill D."/>
            <person name="Huminiecki L."/>
            <person name="Iacono M."/>
            <person name="Ikeo K."/>
            <person name="Iwama A."/>
            <person name="Ishikawa T."/>
            <person name="Jakt M."/>
            <person name="Kanapin A."/>
            <person name="Katoh M."/>
            <person name="Kawasawa Y."/>
            <person name="Kelso J."/>
            <person name="Kitamura H."/>
            <person name="Kitano H."/>
            <person name="Kollias G."/>
            <person name="Krishnan S.P."/>
            <person name="Kruger A."/>
            <person name="Kummerfeld S.K."/>
            <person name="Kurochkin I.V."/>
            <person name="Lareau L.F."/>
            <person name="Lazarevic D."/>
            <person name="Lipovich L."/>
            <person name="Liu J."/>
            <person name="Liuni S."/>
            <person name="McWilliam S."/>
            <person name="Madan Babu M."/>
            <person name="Madera M."/>
            <person name="Marchionni L."/>
            <person name="Matsuda H."/>
            <person name="Matsuzawa S."/>
            <person name="Miki H."/>
            <person name="Mignone F."/>
            <person name="Miyake S."/>
            <person name="Morris K."/>
            <person name="Mottagui-Tabar S."/>
            <person name="Mulder N."/>
            <person name="Nakano N."/>
            <person name="Nakauchi H."/>
            <person name="Ng P."/>
            <person name="Nilsson R."/>
            <person name="Nishiguchi S."/>
            <person name="Nishikawa S."/>
            <person name="Nori F."/>
            <person name="Ohara O."/>
            <person name="Okazaki Y."/>
            <person name="Orlando V."/>
            <person name="Pang K.C."/>
            <person name="Pavan W.J."/>
            <person name="Pavesi G."/>
            <person name="Pesole G."/>
            <person name="Petrovsky N."/>
            <person name="Piazza S."/>
            <person name="Reed J."/>
            <person name="Reid J.F."/>
            <person name="Ring B.Z."/>
            <person name="Ringwald M."/>
            <person name="Rost B."/>
            <person name="Ruan Y."/>
            <person name="Salzberg S.L."/>
            <person name="Sandelin A."/>
            <person name="Schneider C."/>
            <person name="Schoenbach C."/>
            <person name="Sekiguchi K."/>
            <person name="Semple C.A."/>
            <person name="Seno S."/>
            <person name="Sessa L."/>
            <person name="Sheng Y."/>
            <person name="Shibata Y."/>
            <person name="Shimada H."/>
            <person name="Shimada K."/>
            <person name="Silva D."/>
            <person name="Sinclair B."/>
            <person name="Sperling S."/>
            <person name="Stupka E."/>
            <person name="Sugiura K."/>
            <person name="Sultana R."/>
            <person name="Takenaka Y."/>
            <person name="Taki K."/>
            <person name="Tammoja K."/>
            <person name="Tan S.L."/>
            <person name="Tang S."/>
            <person name="Taylor M.S."/>
            <person name="Tegner J."/>
            <person name="Teichmann S.A."/>
            <person name="Ueda H.R."/>
            <person name="van Nimwegen E."/>
            <person name="Verardo R."/>
            <person name="Wei C.L."/>
            <person name="Yagi K."/>
            <person name="Yamanishi H."/>
            <person name="Zabarovsky E."/>
            <person name="Zhu S."/>
            <person name="Zimmer A."/>
            <person name="Hide W."/>
            <person name="Bult C."/>
            <person name="Grimmond S.M."/>
            <person name="Teasdale R.D."/>
            <person name="Liu E.T."/>
            <person name="Brusic V."/>
            <person name="Quackenbush J."/>
            <person name="Wahlestedt C."/>
            <person name="Mattick J.S."/>
            <person name="Hume D.A."/>
            <person name="Kai C."/>
            <person name="Sasaki D."/>
            <person name="Tomaru Y."/>
            <person name="Fukuda S."/>
            <person name="Kanamori-Katayama M."/>
            <person name="Suzuki M."/>
            <person name="Aoki J."/>
            <person name="Arakawa T."/>
            <person name="Iida J."/>
            <person name="Imamura K."/>
            <person name="Itoh M."/>
            <person name="Kato T."/>
            <person name="Kawaji H."/>
            <person name="Kawagashira N."/>
            <person name="Kawashima T."/>
            <person name="Kojima M."/>
            <person name="Kondo S."/>
            <person name="Konno H."/>
            <person name="Nakano K."/>
            <person name="Ninomiya N."/>
            <person name="Nishio T."/>
            <person name="Okada M."/>
            <person name="Plessy C."/>
            <person name="Shibata K."/>
            <person name="Shiraki T."/>
            <person name="Suzuki S."/>
            <person name="Tagami M."/>
            <person name="Waki K."/>
            <person name="Watahiki A."/>
            <person name="Okamura-Oho Y."/>
            <person name="Suzuki H."/>
            <person name="Kawai J."/>
            <person name="Hayashizaki Y."/>
        </authorList>
    </citation>
    <scope>NUCLEOTIDE SEQUENCE [LARGE SCALE MRNA]</scope>
    <source>
        <strain>C57BL/6J</strain>
        <tissue>Cerebellum</tissue>
        <tissue>Head</tissue>
        <tissue>Retina</tissue>
    </source>
</reference>
<name>CQ100_MOUSE</name>